<name>APAG_XANOM</name>
<gene>
    <name evidence="1" type="primary">apaG</name>
    <name type="ordered locus">XOO3539</name>
</gene>
<dbReference type="EMBL" id="AP008229">
    <property type="protein sequence ID" value="BAE70294.1"/>
    <property type="molecule type" value="Genomic_DNA"/>
</dbReference>
<dbReference type="RefSeq" id="WP_011260169.1">
    <property type="nucleotide sequence ID" value="NC_007705.1"/>
</dbReference>
<dbReference type="BMRB" id="Q2NZI3"/>
<dbReference type="SMR" id="Q2NZI3"/>
<dbReference type="KEGG" id="xom:XOO3539"/>
<dbReference type="HOGENOM" id="CLU_128074_0_0_6"/>
<dbReference type="GO" id="GO:0070987">
    <property type="term" value="P:error-free translesion synthesis"/>
    <property type="evidence" value="ECO:0007669"/>
    <property type="project" value="TreeGrafter"/>
</dbReference>
<dbReference type="Gene3D" id="2.60.40.1470">
    <property type="entry name" value="ApaG domain"/>
    <property type="match status" value="1"/>
</dbReference>
<dbReference type="HAMAP" id="MF_00791">
    <property type="entry name" value="ApaG"/>
    <property type="match status" value="1"/>
</dbReference>
<dbReference type="InterPro" id="IPR007474">
    <property type="entry name" value="ApaG_domain"/>
</dbReference>
<dbReference type="InterPro" id="IPR036767">
    <property type="entry name" value="ApaG_sf"/>
</dbReference>
<dbReference type="InterPro" id="IPR023065">
    <property type="entry name" value="Uncharacterised_ApaG"/>
</dbReference>
<dbReference type="NCBIfam" id="NF003967">
    <property type="entry name" value="PRK05461.1"/>
    <property type="match status" value="1"/>
</dbReference>
<dbReference type="PANTHER" id="PTHR14289">
    <property type="entry name" value="F-BOX ONLY PROTEIN 3"/>
    <property type="match status" value="1"/>
</dbReference>
<dbReference type="PANTHER" id="PTHR14289:SF16">
    <property type="entry name" value="POLYMERASE DELTA-INTERACTING PROTEIN 2"/>
    <property type="match status" value="1"/>
</dbReference>
<dbReference type="Pfam" id="PF04379">
    <property type="entry name" value="DUF525"/>
    <property type="match status" value="1"/>
</dbReference>
<dbReference type="SUPFAM" id="SSF110069">
    <property type="entry name" value="ApaG-like"/>
    <property type="match status" value="1"/>
</dbReference>
<dbReference type="PROSITE" id="PS51087">
    <property type="entry name" value="APAG"/>
    <property type="match status" value="1"/>
</dbReference>
<proteinExistence type="inferred from homology"/>
<sequence>MHDDPRYRVEVEVSPRFLAHQSTPDEGRYAFAYSIRIQNAGAVPARLIARHWQITDGNGRTEQVDGEGVVGEQPRLRPGEAFHYTSGVLLETEQGQMQGHYDMVADDGTEFIAPIAAFVLSVPRTLH</sequence>
<accession>Q2NZI3</accession>
<protein>
    <recommendedName>
        <fullName evidence="1">Protein ApaG</fullName>
    </recommendedName>
</protein>
<feature type="chain" id="PRO_1000083670" description="Protein ApaG">
    <location>
        <begin position="1"/>
        <end position="127"/>
    </location>
</feature>
<feature type="domain" description="ApaG" evidence="1">
    <location>
        <begin position="3"/>
        <end position="127"/>
    </location>
</feature>
<organism>
    <name type="scientific">Xanthomonas oryzae pv. oryzae (strain MAFF 311018)</name>
    <dbReference type="NCBI Taxonomy" id="342109"/>
    <lineage>
        <taxon>Bacteria</taxon>
        <taxon>Pseudomonadati</taxon>
        <taxon>Pseudomonadota</taxon>
        <taxon>Gammaproteobacteria</taxon>
        <taxon>Lysobacterales</taxon>
        <taxon>Lysobacteraceae</taxon>
        <taxon>Xanthomonas</taxon>
    </lineage>
</organism>
<reference key="1">
    <citation type="journal article" date="2005" name="Jpn. Agric. Res. Q.">
        <title>Genome sequence of Xanthomonas oryzae pv. oryzae suggests contribution of large numbers of effector genes and insertion sequences to its race diversity.</title>
        <authorList>
            <person name="Ochiai H."/>
            <person name="Inoue Y."/>
            <person name="Takeya M."/>
            <person name="Sasaki A."/>
            <person name="Kaku H."/>
        </authorList>
    </citation>
    <scope>NUCLEOTIDE SEQUENCE [LARGE SCALE GENOMIC DNA]</scope>
    <source>
        <strain>MAFF 311018</strain>
    </source>
</reference>
<evidence type="ECO:0000255" key="1">
    <source>
        <dbReference type="HAMAP-Rule" id="MF_00791"/>
    </source>
</evidence>